<feature type="chain" id="PRO_0000449300" description="UDP-glycosyltransferase 91D2">
    <location>
        <begin position="1"/>
        <end position="473"/>
    </location>
</feature>
<feature type="active site" description="Proton acceptor" evidence="3">
    <location>
        <position position="26"/>
    </location>
</feature>
<feature type="active site" description="Charge relay" evidence="3">
    <location>
        <position position="121"/>
    </location>
</feature>
<feature type="binding site" evidence="2">
    <location>
        <position position="26"/>
    </location>
    <ligand>
        <name>an anthocyanidin</name>
        <dbReference type="ChEBI" id="CHEBI:143576"/>
    </ligand>
</feature>
<feature type="binding site" evidence="1">
    <location>
        <position position="344"/>
    </location>
    <ligand>
        <name>UDP-alpha-D-glucose</name>
        <dbReference type="ChEBI" id="CHEBI:58885"/>
    </ligand>
</feature>
<feature type="binding site" evidence="1">
    <location>
        <position position="346"/>
    </location>
    <ligand>
        <name>UDP-alpha-D-glucose</name>
        <dbReference type="ChEBI" id="CHEBI:58885"/>
    </ligand>
</feature>
<feature type="binding site" evidence="1">
    <location>
        <position position="361"/>
    </location>
    <ligand>
        <name>UDP-alpha-D-glucose</name>
        <dbReference type="ChEBI" id="CHEBI:58885"/>
    </ligand>
</feature>
<feature type="binding site" evidence="1">
    <location>
        <position position="366"/>
    </location>
    <ligand>
        <name>UDP-alpha-D-glucose</name>
        <dbReference type="ChEBI" id="CHEBI:58885"/>
    </ligand>
</feature>
<feature type="binding site" evidence="1">
    <location>
        <position position="369"/>
    </location>
    <ligand>
        <name>UDP-alpha-D-glucose</name>
        <dbReference type="ChEBI" id="CHEBI:58885"/>
    </ligand>
</feature>
<feature type="binding site" evidence="2">
    <location>
        <position position="384"/>
    </location>
    <ligand>
        <name>an anthocyanidin</name>
        <dbReference type="ChEBI" id="CHEBI:143576"/>
    </ligand>
</feature>
<feature type="binding site" evidence="1">
    <location>
        <position position="385"/>
    </location>
    <ligand>
        <name>UDP-alpha-D-glucose</name>
        <dbReference type="ChEBI" id="CHEBI:58885"/>
    </ligand>
</feature>
<feature type="binding site" evidence="1">
    <location>
        <position position="386"/>
    </location>
    <ligand>
        <name>UDP-alpha-D-glucose</name>
        <dbReference type="ChEBI" id="CHEBI:58885"/>
    </ligand>
</feature>
<name>U91D2_STERE</name>
<proteinExistence type="evidence at protein level"/>
<accession>B3VI56</accession>
<comment type="function">
    <text evidence="4 5">Involved in the biosynthesis of steviol glycosides in leaves (PubMed:26358188, PubMed:27923373). Converts the mono-glycoside steviolmonoside to the bi-glycoside steviolbioside (PubMed:26358188, PubMed:27923373). Converts the bi-glycoside rubusoside to the tri-glycoside stevioside (PubMed:27923373). Converts the tri-glycoside stevioside to the tetra-glycoside rebaudioside E (PubMed:27923373). Converts the tetra-glycoside rebaudioside A to the penta-glycoside rebaudioside E (PubMed:27923373).</text>
</comment>
<comment type="catalytic activity">
    <reaction evidence="4 5">
        <text>steviolmonoside + UDP-alpha-D-glucose = steviolbioside + UDP + H(+)</text>
        <dbReference type="Rhea" id="RHEA:61740"/>
        <dbReference type="ChEBI" id="CHEBI:15378"/>
        <dbReference type="ChEBI" id="CHEBI:58223"/>
        <dbReference type="ChEBI" id="CHEBI:58885"/>
        <dbReference type="ChEBI" id="CHEBI:145009"/>
        <dbReference type="ChEBI" id="CHEBI:145010"/>
    </reaction>
    <physiologicalReaction direction="left-to-right" evidence="4 5">
        <dbReference type="Rhea" id="RHEA:61741"/>
    </physiologicalReaction>
</comment>
<comment type="catalytic activity">
    <reaction evidence="5">
        <text>rubusoside + UDP-alpha-D-glucose = stevioside + UDP + H(+)</text>
        <dbReference type="Rhea" id="RHEA:61748"/>
        <dbReference type="ChEBI" id="CHEBI:9271"/>
        <dbReference type="ChEBI" id="CHEBI:15378"/>
        <dbReference type="ChEBI" id="CHEBI:58223"/>
        <dbReference type="ChEBI" id="CHEBI:58885"/>
        <dbReference type="ChEBI" id="CHEBI:145021"/>
    </reaction>
    <physiologicalReaction direction="left-to-right" evidence="5">
        <dbReference type="Rhea" id="RHEA:61749"/>
    </physiologicalReaction>
</comment>
<comment type="catalytic activity">
    <reaction evidence="5">
        <text>stevioside + UDP-alpha-D-glucose = rebaudioside E + UDP + H(+)</text>
        <dbReference type="Rhea" id="RHEA:61764"/>
        <dbReference type="ChEBI" id="CHEBI:9271"/>
        <dbReference type="ChEBI" id="CHEBI:15378"/>
        <dbReference type="ChEBI" id="CHEBI:58223"/>
        <dbReference type="ChEBI" id="CHEBI:58885"/>
        <dbReference type="ChEBI" id="CHEBI:145018"/>
    </reaction>
    <physiologicalReaction direction="left-to-right" evidence="5">
        <dbReference type="Rhea" id="RHEA:61765"/>
    </physiologicalReaction>
</comment>
<comment type="catalytic activity">
    <reaction evidence="5">
        <text>rebaudioside A + UDP-alpha-D-glucose = rebaudioside D + UDP + H(+)</text>
        <dbReference type="Rhea" id="RHEA:61768"/>
        <dbReference type="ChEBI" id="CHEBI:15378"/>
        <dbReference type="ChEBI" id="CHEBI:58223"/>
        <dbReference type="ChEBI" id="CHEBI:58885"/>
        <dbReference type="ChEBI" id="CHEBI:145012"/>
        <dbReference type="ChEBI" id="CHEBI:145022"/>
    </reaction>
    <physiologicalReaction direction="left-to-right" evidence="5">
        <dbReference type="Rhea" id="RHEA:61769"/>
    </physiologicalReaction>
</comment>
<comment type="miscellaneous">
    <text evidence="8">Leaves of the 'sweet herb' Stevia rebaudiana contain a mix of steviol glycosides, compounds that are unique in the plant world because of their intense sweetness and high concentration in leaf tissue (Probable). Stevia leaves have been used as natural sweeteners in South America for centuries (Probable).</text>
</comment>
<comment type="similarity">
    <text evidence="8">Belongs to the UDP-glycosyltransferase family.</text>
</comment>
<sequence>MATSDSIVDDRKQLHVATFPWLAFGHILPYLQLSKLIAEKGHKVSFLSTTRNIQRLSSHISPLINVVQLTLPRVQELPEDAEATTDVHPEDIPYLKKASDGLQPEVTRFLEQHSPDWIIYDYTHYWLPSIAASLGISRAHFSVTTPWAIAYMGPSADAMINGSDGRTTVEDLTTPPKWFPFPTKVCWRKHDLARLVPYKAPGISDGYRMGLVLKGSDCLLSKCYHEFGTQWLPLLETLHQVPVVPVGLLPPEVPGDEKDETWVSIKKWLDGKQKGSVVYVALGSEVLVSQTEVVELALGLELSGLPFVWAYRKPKGPAKSDSVELPDGFVERTRDRGLVWTSWAPQLRILSHESVCGFLTHCGSGSIVEGLMFGHPLIMLPIFGDQPLNARLLEDKQVGIEIPRNEEDGCLTKESVARSLRSVVVEKEGEIYKANARELSKIYNDTKVEKEYVSQFVDYLEKNTRAVAIDHES</sequence>
<gene>
    <name evidence="6 7" type="primary">UGT91D2</name>
</gene>
<keyword id="KW-0328">Glycosyltransferase</keyword>
<keyword id="KW-0808">Transferase</keyword>
<organism>
    <name type="scientific">Stevia rebaudiana</name>
    <name type="common">Stevia</name>
    <name type="synonym">Eupatorium rebaudianum</name>
    <dbReference type="NCBI Taxonomy" id="55670"/>
    <lineage>
        <taxon>Eukaryota</taxon>
        <taxon>Viridiplantae</taxon>
        <taxon>Streptophyta</taxon>
        <taxon>Embryophyta</taxon>
        <taxon>Tracheophyta</taxon>
        <taxon>Spermatophyta</taxon>
        <taxon>Magnoliopsida</taxon>
        <taxon>eudicotyledons</taxon>
        <taxon>Gunneridae</taxon>
        <taxon>Pentapetalae</taxon>
        <taxon>asterids</taxon>
        <taxon>campanulids</taxon>
        <taxon>Asterales</taxon>
        <taxon>Asteraceae</taxon>
        <taxon>Asteroideae</taxon>
        <taxon>Heliantheae alliance</taxon>
        <taxon>Eupatorieae</taxon>
        <taxon>Stevia</taxon>
    </lineage>
</organism>
<protein>
    <recommendedName>
        <fullName evidence="6 7">UDP-glycosyltransferase 91D2</fullName>
        <ecNumber evidence="4 5">2.4.1.-</ecNumber>
    </recommendedName>
</protein>
<reference key="1">
    <citation type="submission" date="2008-05" db="EMBL/GenBank/DDBJ databases">
        <title>Isolation and cloning of Stevia rebaudiana UDP-glucosyltransferase.</title>
        <authorList>
            <person name="Joseph A.Y."/>
            <person name="Babu V.S."/>
            <person name="Dev S.S."/>
            <person name="Harish M."/>
            <person name="Rajesh M.D."/>
            <person name="Anisha S."/>
            <person name="Mohankumar C."/>
        </authorList>
    </citation>
    <scope>NUCLEOTIDE SEQUENCE [MRNA]</scope>
    <source>
        <tissue>Leaf</tissue>
    </source>
</reference>
<reference key="2">
    <citation type="journal article" date="2016" name="Cell Res.">
        <title>Pathway mining-based integration of critical enzyme parts for de novo biosynthesis of steviolglycosides sweetener in Escherichia coli.</title>
        <authorList>
            <person name="Wang J."/>
            <person name="Li S."/>
            <person name="Xiong Z."/>
            <person name="Wang Y."/>
        </authorList>
    </citation>
    <scope>FUNCTION</scope>
    <scope>CATALYTIC ACTIVITY</scope>
</reference>
<reference key="3">
    <citation type="journal article" date="2016" name="Microb. Cell Fact.">
        <title>Microbial production of next-generation stevia sweeteners.</title>
        <authorList>
            <person name="Olsson K."/>
            <person name="Carlsen S."/>
            <person name="Semmler A."/>
            <person name="Simon E."/>
            <person name="Mikkelsen M.D."/>
            <person name="Moeller B.L."/>
        </authorList>
    </citation>
    <scope>FUNCTION</scope>
    <scope>CATALYTIC ACTIVITY</scope>
</reference>
<evidence type="ECO:0000250" key="1">
    <source>
        <dbReference type="UniProtKB" id="A0A0A1HA03"/>
    </source>
</evidence>
<evidence type="ECO:0000250" key="2">
    <source>
        <dbReference type="UniProtKB" id="P51094"/>
    </source>
</evidence>
<evidence type="ECO:0000250" key="3">
    <source>
        <dbReference type="UniProtKB" id="Q6VAB4"/>
    </source>
</evidence>
<evidence type="ECO:0000269" key="4">
    <source>
    </source>
</evidence>
<evidence type="ECO:0000269" key="5">
    <source>
    </source>
</evidence>
<evidence type="ECO:0000303" key="6">
    <source>
    </source>
</evidence>
<evidence type="ECO:0000303" key="7">
    <source>
    </source>
</evidence>
<evidence type="ECO:0000305" key="8"/>
<dbReference type="EC" id="2.4.1.-" evidence="4 5"/>
<dbReference type="EMBL" id="EU751291">
    <property type="protein sequence ID" value="ACE87855.1"/>
    <property type="molecule type" value="mRNA"/>
</dbReference>
<dbReference type="SMR" id="B3VI56"/>
<dbReference type="CAZy" id="GT1">
    <property type="family name" value="Glycosyltransferase Family 1"/>
</dbReference>
<dbReference type="GO" id="GO:0035251">
    <property type="term" value="F:UDP-glucosyltransferase activity"/>
    <property type="evidence" value="ECO:0007669"/>
    <property type="project" value="InterPro"/>
</dbReference>
<dbReference type="CDD" id="cd03784">
    <property type="entry name" value="GT1_Gtf-like"/>
    <property type="match status" value="1"/>
</dbReference>
<dbReference type="FunFam" id="3.40.50.2000:FF:000037">
    <property type="entry name" value="Glycosyltransferase"/>
    <property type="match status" value="1"/>
</dbReference>
<dbReference type="Gene3D" id="3.40.50.2000">
    <property type="entry name" value="Glycogen Phosphorylase B"/>
    <property type="match status" value="2"/>
</dbReference>
<dbReference type="InterPro" id="IPR050481">
    <property type="entry name" value="UDP-glycosyltransf_plant"/>
</dbReference>
<dbReference type="InterPro" id="IPR002213">
    <property type="entry name" value="UDP_glucos_trans"/>
</dbReference>
<dbReference type="InterPro" id="IPR035595">
    <property type="entry name" value="UDP_glycos_trans_CS"/>
</dbReference>
<dbReference type="PANTHER" id="PTHR48049">
    <property type="entry name" value="GLYCOSYLTRANSFERASE"/>
    <property type="match status" value="1"/>
</dbReference>
<dbReference type="PANTHER" id="PTHR48049:SF60">
    <property type="entry name" value="UDP-GLYCOSYLTRANSFERASE 91B1"/>
    <property type="match status" value="1"/>
</dbReference>
<dbReference type="Pfam" id="PF00201">
    <property type="entry name" value="UDPGT"/>
    <property type="match status" value="1"/>
</dbReference>
<dbReference type="SUPFAM" id="SSF53756">
    <property type="entry name" value="UDP-Glycosyltransferase/glycogen phosphorylase"/>
    <property type="match status" value="1"/>
</dbReference>
<dbReference type="PROSITE" id="PS00375">
    <property type="entry name" value="UDPGT"/>
    <property type="match status" value="1"/>
</dbReference>